<name>HUTU_SALCH</name>
<proteinExistence type="inferred from homology"/>
<sequence length="561" mass="61466">MPESKYRQQTIRAPRGTVLTAKSWLTEAPLRMLMNNLDPDVAENPHELVVYGGIGRAARNWECYDAIVDALTRLEADETLLIQSGKPVGVFKTHDNAPRVLIANSNLVPHWATWEHFNELDAKGLAMYGQMTAGSWIYIGSQGIVQGTYETFVEAGRQHYNGTLAGRWVLTAGLGGMGGAQPLAATLAGACSLTIECQQSRIDFRLRTRYVDEQAATLDDALARITRYTREGKAVSVALCANAADILPELVNRGVRPDLVTDQTSAHDPLHGYLPSGWRWEEYQKNAQSDPHGTMQAAKRSMAAHVRAMLAFSKMGVPTFDYGNNIRQMAKEMGVENAFDFPGFVPAYIRPLFCRGIGPFRWVALSGDPQDIYKTDAKVKEIVAEDKHLHHWLDMARERIHFQGLPARICWVGLEWRQKLGLAFNEMVRCGEVSAPIVIGRDHLDSGSVASPNRETEAMRDGSDAVSDWPLLNALLNTASGATWVSLHHGGGVGMGFSQHAGMVIVCDGTDEAAARIRRVLHNDPATGVMRHADAGYDLAVECAVEQGLNLPMVAATQGKG</sequence>
<feature type="chain" id="PRO_1000025147" description="Urocanate hydratase">
    <location>
        <begin position="1"/>
        <end position="561"/>
    </location>
</feature>
<feature type="active site" evidence="1">
    <location>
        <position position="410"/>
    </location>
</feature>
<feature type="binding site" evidence="1">
    <location>
        <begin position="52"/>
        <end position="53"/>
    </location>
    <ligand>
        <name>NAD(+)</name>
        <dbReference type="ChEBI" id="CHEBI:57540"/>
    </ligand>
</feature>
<feature type="binding site" evidence="1">
    <location>
        <position position="130"/>
    </location>
    <ligand>
        <name>NAD(+)</name>
        <dbReference type="ChEBI" id="CHEBI:57540"/>
    </ligand>
</feature>
<feature type="binding site" evidence="1">
    <location>
        <begin position="176"/>
        <end position="178"/>
    </location>
    <ligand>
        <name>NAD(+)</name>
        <dbReference type="ChEBI" id="CHEBI:57540"/>
    </ligand>
</feature>
<feature type="binding site" evidence="1">
    <location>
        <position position="196"/>
    </location>
    <ligand>
        <name>NAD(+)</name>
        <dbReference type="ChEBI" id="CHEBI:57540"/>
    </ligand>
</feature>
<feature type="binding site" evidence="1">
    <location>
        <position position="201"/>
    </location>
    <ligand>
        <name>NAD(+)</name>
        <dbReference type="ChEBI" id="CHEBI:57540"/>
    </ligand>
</feature>
<feature type="binding site" evidence="1">
    <location>
        <begin position="242"/>
        <end position="243"/>
    </location>
    <ligand>
        <name>NAD(+)</name>
        <dbReference type="ChEBI" id="CHEBI:57540"/>
    </ligand>
</feature>
<feature type="binding site" evidence="1">
    <location>
        <begin position="263"/>
        <end position="267"/>
    </location>
    <ligand>
        <name>NAD(+)</name>
        <dbReference type="ChEBI" id="CHEBI:57540"/>
    </ligand>
</feature>
<feature type="binding site" evidence="1">
    <location>
        <begin position="273"/>
        <end position="274"/>
    </location>
    <ligand>
        <name>NAD(+)</name>
        <dbReference type="ChEBI" id="CHEBI:57540"/>
    </ligand>
</feature>
<feature type="binding site" evidence="1">
    <location>
        <position position="322"/>
    </location>
    <ligand>
        <name>NAD(+)</name>
        <dbReference type="ChEBI" id="CHEBI:57540"/>
    </ligand>
</feature>
<feature type="binding site" evidence="1">
    <location>
        <position position="492"/>
    </location>
    <ligand>
        <name>NAD(+)</name>
        <dbReference type="ChEBI" id="CHEBI:57540"/>
    </ligand>
</feature>
<evidence type="ECO:0000255" key="1">
    <source>
        <dbReference type="HAMAP-Rule" id="MF_00577"/>
    </source>
</evidence>
<keyword id="KW-0963">Cytoplasm</keyword>
<keyword id="KW-0369">Histidine metabolism</keyword>
<keyword id="KW-0456">Lyase</keyword>
<keyword id="KW-0520">NAD</keyword>
<gene>
    <name evidence="1" type="primary">hutU</name>
    <name type="ordered locus">SCH_0788</name>
</gene>
<accession>Q57RG7</accession>
<reference key="1">
    <citation type="journal article" date="2005" name="Nucleic Acids Res.">
        <title>The genome sequence of Salmonella enterica serovar Choleraesuis, a highly invasive and resistant zoonotic pathogen.</title>
        <authorList>
            <person name="Chiu C.-H."/>
            <person name="Tang P."/>
            <person name="Chu C."/>
            <person name="Hu S."/>
            <person name="Bao Q."/>
            <person name="Yu J."/>
            <person name="Chou Y.-Y."/>
            <person name="Wang H.-S."/>
            <person name="Lee Y.-S."/>
        </authorList>
    </citation>
    <scope>NUCLEOTIDE SEQUENCE [LARGE SCALE GENOMIC DNA]</scope>
    <source>
        <strain>SC-B67</strain>
    </source>
</reference>
<protein>
    <recommendedName>
        <fullName evidence="1">Urocanate hydratase</fullName>
        <shortName evidence="1">Urocanase</shortName>
        <ecNumber evidence="1">4.2.1.49</ecNumber>
    </recommendedName>
    <alternativeName>
        <fullName evidence="1">Imidazolonepropionate hydrolase</fullName>
    </alternativeName>
</protein>
<comment type="function">
    <text evidence="1">Catalyzes the conversion of urocanate to 4-imidazolone-5-propionate.</text>
</comment>
<comment type="catalytic activity">
    <reaction evidence="1">
        <text>4-imidazolone-5-propanoate = trans-urocanate + H2O</text>
        <dbReference type="Rhea" id="RHEA:13101"/>
        <dbReference type="ChEBI" id="CHEBI:15377"/>
        <dbReference type="ChEBI" id="CHEBI:17771"/>
        <dbReference type="ChEBI" id="CHEBI:77893"/>
        <dbReference type="EC" id="4.2.1.49"/>
    </reaction>
</comment>
<comment type="cofactor">
    <cofactor evidence="1">
        <name>NAD(+)</name>
        <dbReference type="ChEBI" id="CHEBI:57540"/>
    </cofactor>
    <text evidence="1">Binds 1 NAD(+) per subunit.</text>
</comment>
<comment type="pathway">
    <text evidence="1">Amino-acid degradation; L-histidine degradation into L-glutamate; N-formimidoyl-L-glutamate from L-histidine: step 2/3.</text>
</comment>
<comment type="subcellular location">
    <subcellularLocation>
        <location evidence="1">Cytoplasm</location>
    </subcellularLocation>
</comment>
<comment type="similarity">
    <text evidence="1">Belongs to the urocanase family.</text>
</comment>
<dbReference type="EC" id="4.2.1.49" evidence="1"/>
<dbReference type="EMBL" id="AE017220">
    <property type="protein sequence ID" value="AAX64694.1"/>
    <property type="molecule type" value="Genomic_DNA"/>
</dbReference>
<dbReference type="RefSeq" id="WP_001115209.1">
    <property type="nucleotide sequence ID" value="NC_006905.1"/>
</dbReference>
<dbReference type="SMR" id="Q57RG7"/>
<dbReference type="KEGG" id="sec:SCH_0788"/>
<dbReference type="HOGENOM" id="CLU_018868_0_1_6"/>
<dbReference type="UniPathway" id="UPA00379">
    <property type="reaction ID" value="UER00550"/>
</dbReference>
<dbReference type="Proteomes" id="UP000000538">
    <property type="component" value="Chromosome"/>
</dbReference>
<dbReference type="GO" id="GO:0005737">
    <property type="term" value="C:cytoplasm"/>
    <property type="evidence" value="ECO:0007669"/>
    <property type="project" value="UniProtKB-SubCell"/>
</dbReference>
<dbReference type="GO" id="GO:0016153">
    <property type="term" value="F:urocanate hydratase activity"/>
    <property type="evidence" value="ECO:0007669"/>
    <property type="project" value="UniProtKB-UniRule"/>
</dbReference>
<dbReference type="GO" id="GO:0019556">
    <property type="term" value="P:L-histidine catabolic process to glutamate and formamide"/>
    <property type="evidence" value="ECO:0007669"/>
    <property type="project" value="UniProtKB-UniPathway"/>
</dbReference>
<dbReference type="GO" id="GO:0019557">
    <property type="term" value="P:L-histidine catabolic process to glutamate and formate"/>
    <property type="evidence" value="ECO:0007669"/>
    <property type="project" value="UniProtKB-UniPathway"/>
</dbReference>
<dbReference type="FunFam" id="3.40.50.10730:FF:000001">
    <property type="entry name" value="Urocanate hydratase"/>
    <property type="match status" value="1"/>
</dbReference>
<dbReference type="Gene3D" id="3.40.50.10730">
    <property type="entry name" value="Urocanase like domains"/>
    <property type="match status" value="1"/>
</dbReference>
<dbReference type="Gene3D" id="3.40.1770.10">
    <property type="entry name" value="Urocanase superfamily"/>
    <property type="match status" value="1"/>
</dbReference>
<dbReference type="HAMAP" id="MF_00577">
    <property type="entry name" value="HutU"/>
    <property type="match status" value="1"/>
</dbReference>
<dbReference type="InterPro" id="IPR055351">
    <property type="entry name" value="Urocanase"/>
</dbReference>
<dbReference type="InterPro" id="IPR023637">
    <property type="entry name" value="Urocanase-like"/>
</dbReference>
<dbReference type="InterPro" id="IPR035401">
    <property type="entry name" value="Urocanase_C"/>
</dbReference>
<dbReference type="InterPro" id="IPR038364">
    <property type="entry name" value="Urocanase_central_sf"/>
</dbReference>
<dbReference type="InterPro" id="IPR023636">
    <property type="entry name" value="Urocanase_CS"/>
</dbReference>
<dbReference type="InterPro" id="IPR035400">
    <property type="entry name" value="Urocanase_N"/>
</dbReference>
<dbReference type="InterPro" id="IPR035085">
    <property type="entry name" value="Urocanase_Rossmann-like"/>
</dbReference>
<dbReference type="InterPro" id="IPR036190">
    <property type="entry name" value="Urocanase_sf"/>
</dbReference>
<dbReference type="NCBIfam" id="TIGR01228">
    <property type="entry name" value="hutU"/>
    <property type="match status" value="1"/>
</dbReference>
<dbReference type="NCBIfam" id="NF003820">
    <property type="entry name" value="PRK05414.1"/>
    <property type="match status" value="1"/>
</dbReference>
<dbReference type="PANTHER" id="PTHR12216">
    <property type="entry name" value="UROCANATE HYDRATASE"/>
    <property type="match status" value="1"/>
</dbReference>
<dbReference type="PANTHER" id="PTHR12216:SF4">
    <property type="entry name" value="UROCANATE HYDRATASE"/>
    <property type="match status" value="1"/>
</dbReference>
<dbReference type="Pfam" id="PF01175">
    <property type="entry name" value="Urocanase"/>
    <property type="match status" value="1"/>
</dbReference>
<dbReference type="Pfam" id="PF17392">
    <property type="entry name" value="Urocanase_C"/>
    <property type="match status" value="1"/>
</dbReference>
<dbReference type="Pfam" id="PF17391">
    <property type="entry name" value="Urocanase_N"/>
    <property type="match status" value="1"/>
</dbReference>
<dbReference type="PIRSF" id="PIRSF001423">
    <property type="entry name" value="Urocanate_hydrat"/>
    <property type="match status" value="1"/>
</dbReference>
<dbReference type="SUPFAM" id="SSF111326">
    <property type="entry name" value="Urocanase"/>
    <property type="match status" value="1"/>
</dbReference>
<dbReference type="PROSITE" id="PS01233">
    <property type="entry name" value="UROCANASE"/>
    <property type="match status" value="1"/>
</dbReference>
<organism>
    <name type="scientific">Salmonella choleraesuis (strain SC-B67)</name>
    <dbReference type="NCBI Taxonomy" id="321314"/>
    <lineage>
        <taxon>Bacteria</taxon>
        <taxon>Pseudomonadati</taxon>
        <taxon>Pseudomonadota</taxon>
        <taxon>Gammaproteobacteria</taxon>
        <taxon>Enterobacterales</taxon>
        <taxon>Enterobacteriaceae</taxon>
        <taxon>Salmonella</taxon>
    </lineage>
</organism>